<feature type="chain" id="PRO_0000221031" description="Barrier-to-autointegration factor 1">
    <location>
        <begin position="1"/>
        <end position="89"/>
    </location>
</feature>
<feature type="mutagenesis site" description="In t1639; at the permissive temperature of 15 degrees Celsius, progeny of X-ray-irradiated adults die at the embryonic stage in a unc-32 mutant background. In addition, progeny of non-irradiated adults dies at the embryonic stage in a lem-3 and unc-32 mutant background." evidence="3">
    <original>G</original>
    <variation>D</variation>
    <location>
        <position position="38"/>
    </location>
</feature>
<accession>Q03565</accession>
<accession>Q9BMU1</accession>
<organism>
    <name type="scientific">Caenorhabditis elegans</name>
    <dbReference type="NCBI Taxonomy" id="6239"/>
    <lineage>
        <taxon>Eukaryota</taxon>
        <taxon>Metazoa</taxon>
        <taxon>Ecdysozoa</taxon>
        <taxon>Nematoda</taxon>
        <taxon>Chromadorea</taxon>
        <taxon>Rhabditida</taxon>
        <taxon>Rhabditina</taxon>
        <taxon>Rhabditomorpha</taxon>
        <taxon>Rhabditoidea</taxon>
        <taxon>Rhabditidae</taxon>
        <taxon>Peloderinae</taxon>
        <taxon>Caenorhabditis</taxon>
    </lineage>
</organism>
<name>BAF1_CAEEL</name>
<sequence>MSTSVKHREFVGEPMGDKEVTCIAGIGPTYGTKLTDAGFDKAYVLFGQYLLLKKDEDLFIEWLKETAGVTANHAKTAFNCLNEWADQFM</sequence>
<reference key="1">
    <citation type="journal article" date="1994" name="Nature">
        <title>2.2 Mb of contiguous nucleotide sequence from chromosome III of C. elegans.</title>
        <authorList>
            <person name="Wilson R."/>
            <person name="Ainscough R."/>
            <person name="Anderson K."/>
            <person name="Baynes C."/>
            <person name="Berks M."/>
            <person name="Bonfield J."/>
            <person name="Burton J."/>
            <person name="Connell M."/>
            <person name="Copsey T."/>
            <person name="Cooper J."/>
            <person name="Coulson A."/>
            <person name="Craxton M."/>
            <person name="Dear S."/>
            <person name="Du Z."/>
            <person name="Durbin R."/>
            <person name="Favello A."/>
            <person name="Fraser A."/>
            <person name="Fulton L."/>
            <person name="Gardner A."/>
            <person name="Green P."/>
            <person name="Hawkins T."/>
            <person name="Hillier L."/>
            <person name="Jier M."/>
            <person name="Johnston L."/>
            <person name="Jones M."/>
            <person name="Kershaw J."/>
            <person name="Kirsten J."/>
            <person name="Laisster N."/>
            <person name="Latreille P."/>
            <person name="Lightning J."/>
            <person name="Lloyd C."/>
            <person name="Mortimore B."/>
            <person name="O'Callaghan M."/>
            <person name="Parsons J."/>
            <person name="Percy C."/>
            <person name="Rifken L."/>
            <person name="Roopra A."/>
            <person name="Saunders D."/>
            <person name="Shownkeen R."/>
            <person name="Sims M."/>
            <person name="Smaldon N."/>
            <person name="Smith A."/>
            <person name="Smith M."/>
            <person name="Sonnhammer E."/>
            <person name="Staden R."/>
            <person name="Sulston J."/>
            <person name="Thierry-Mieg J."/>
            <person name="Thomas K."/>
            <person name="Vaudin M."/>
            <person name="Vaughan K."/>
            <person name="Waterston R."/>
            <person name="Watson A."/>
            <person name="Weinstock L."/>
            <person name="Wilkinson-Sproat J."/>
            <person name="Wohldman P."/>
        </authorList>
    </citation>
    <scope>NUCLEOTIDE SEQUENCE [LARGE SCALE GENOMIC DNA]</scope>
    <source>
        <strain>Bristol N2</strain>
    </source>
</reference>
<reference key="2">
    <citation type="journal article" date="1998" name="Science">
        <title>Genome sequence of the nematode C. elegans: a platform for investigating biology.</title>
        <authorList>
            <consortium name="The C. elegans sequencing consortium"/>
        </authorList>
    </citation>
    <scope>NUCLEOTIDE SEQUENCE [LARGE SCALE GENOMIC DNA]</scope>
    <source>
        <strain>Bristol N2</strain>
    </source>
</reference>
<reference key="3">
    <citation type="submission" date="2000-08" db="EMBL/GenBank/DDBJ databases">
        <title>The Caenorhabditis elegans transcriptome project, a complementary view of the genome.</title>
        <authorList>
            <person name="Kohara Y."/>
            <person name="Shin-i T."/>
            <person name="Suzuki Y."/>
            <person name="Sugano S."/>
            <person name="Potdevin M."/>
            <person name="Thierry-Mieg Y."/>
            <person name="Thierry-Mieg D."/>
            <person name="Thierry-Mieg J."/>
        </authorList>
    </citation>
    <scope>NUCLEOTIDE SEQUENCE [LARGE SCALE MRNA]</scope>
    <source>
        <strain>Bristol N2</strain>
    </source>
</reference>
<reference key="4">
    <citation type="journal article" date="2003" name="Proc. Natl. Acad. Sci. U.S.A.">
        <title>MAN1 and emerin have overlapping function(s) essential for chromosome segregation and cell division in Caenorhabditis elegans.</title>
        <authorList>
            <person name="Liu J."/>
            <person name="Lee K.K."/>
            <person name="Segura-Totten M."/>
            <person name="Neufeld E."/>
            <person name="Wilson K.L."/>
            <person name="Gruenbaum Y."/>
        </authorList>
    </citation>
    <scope>FUNCTION</scope>
    <scope>INTERACTION WITH EMR-1 AND LEM-2</scope>
</reference>
<reference key="5">
    <citation type="journal article" date="2007" name="EMBO J.">
        <title>Caenorhabditis elegans BAF-1 and its kinase VRK-1 participate directly in post-mitotic nuclear envelope assembly.</title>
        <authorList>
            <person name="Gorjanacz M."/>
            <person name="Klerkx E.P."/>
            <person name="Galy V."/>
            <person name="Santarella R."/>
            <person name="Lopez-Iglesias C."/>
            <person name="Askjaer P."/>
            <person name="Mattaj I.W."/>
        </authorList>
    </citation>
    <scope>FUNCTION</scope>
    <scope>SUBCELLULAR LOCATION</scope>
    <scope>DISRUPTION PHENOTYPE</scope>
</reference>
<reference key="6">
    <citation type="journal article" date="2012" name="Cell">
        <title>Coordination of kinase and phosphatase activities by Lem4 enables nuclear envelope reassembly during mitosis.</title>
        <authorList>
            <person name="Asencio C."/>
            <person name="Davidson I.F."/>
            <person name="Santarella-Mellwig R."/>
            <person name="Ly-Hartig T.B."/>
            <person name="Mall M."/>
            <person name="Wallenfang M.R."/>
            <person name="Mattaj I.W."/>
            <person name="Gorjanacz M."/>
        </authorList>
    </citation>
    <scope>PHOSPHORYLATION</scope>
    <scope>DEPHOSPHORYLATION</scope>
    <scope>INTERACTION WITH LEM-4L</scope>
</reference>
<reference key="7">
    <citation type="journal article" date="2012" name="PLoS ONE">
        <title>LEM-3 - a LEM domain containing nuclease involved in the DNA damage response in C. elegans.</title>
        <authorList>
            <person name="Dittrich C.M."/>
            <person name="Kratz K."/>
            <person name="Sendoel A."/>
            <person name="Gruenbaum Y."/>
            <person name="Jiricny J."/>
            <person name="Hengartner M.O."/>
        </authorList>
    </citation>
    <scope>FUNCTION</scope>
    <scope>MUTAGENESIS OF GLY-38</scope>
</reference>
<dbReference type="EMBL" id="Z19152">
    <property type="protein sequence ID" value="CAA79543.2"/>
    <property type="molecule type" value="Genomic_DNA"/>
</dbReference>
<dbReference type="EMBL" id="AF303272">
    <property type="protein sequence ID" value="AAG50230.1"/>
    <property type="molecule type" value="mRNA"/>
</dbReference>
<dbReference type="PIR" id="G88555">
    <property type="entry name" value="G88555"/>
</dbReference>
<dbReference type="PIR" id="S28284">
    <property type="entry name" value="S28284"/>
</dbReference>
<dbReference type="RefSeq" id="NP_001379048.1">
    <property type="nucleotide sequence ID" value="NM_001392176.1"/>
</dbReference>
<dbReference type="RefSeq" id="NP_499085.1">
    <property type="nucleotide sequence ID" value="NM_066684.5"/>
</dbReference>
<dbReference type="SMR" id="Q03565"/>
<dbReference type="BioGRID" id="41527">
    <property type="interactions" value="10"/>
</dbReference>
<dbReference type="FunCoup" id="Q03565">
    <property type="interactions" value="2239"/>
</dbReference>
<dbReference type="IntAct" id="Q03565">
    <property type="interactions" value="4"/>
</dbReference>
<dbReference type="STRING" id="6239.B0464.7.1"/>
<dbReference type="iPTMnet" id="Q03565"/>
<dbReference type="PaxDb" id="6239-B0464.7"/>
<dbReference type="PeptideAtlas" id="Q03565"/>
<dbReference type="EnsemblMetazoa" id="B0464.7.1">
    <property type="protein sequence ID" value="B0464.7.1"/>
    <property type="gene ID" value="WBGene00000235"/>
</dbReference>
<dbReference type="GeneID" id="176330"/>
<dbReference type="UCSC" id="B0464.7.1">
    <property type="organism name" value="c. elegans"/>
</dbReference>
<dbReference type="AGR" id="WB:WBGene00000235"/>
<dbReference type="WormBase" id="B0464.7">
    <property type="protein sequence ID" value="CE26704"/>
    <property type="gene ID" value="WBGene00000235"/>
    <property type="gene designation" value="baf-1"/>
</dbReference>
<dbReference type="eggNOG" id="KOG4233">
    <property type="taxonomic scope" value="Eukaryota"/>
</dbReference>
<dbReference type="GeneTree" id="ENSGT00390000018613"/>
<dbReference type="HOGENOM" id="CLU_167806_0_0_1"/>
<dbReference type="InParanoid" id="Q03565"/>
<dbReference type="OMA" id="TEWCDAF"/>
<dbReference type="OrthoDB" id="9997163at2759"/>
<dbReference type="PhylomeDB" id="Q03565"/>
<dbReference type="Reactome" id="R-CEL-2995383">
    <property type="pathway name" value="Initiation of Nuclear Envelope (NE) Reformation"/>
</dbReference>
<dbReference type="SignaLink" id="Q03565"/>
<dbReference type="PRO" id="PR:Q03565"/>
<dbReference type="Proteomes" id="UP000001940">
    <property type="component" value="Chromosome III"/>
</dbReference>
<dbReference type="Bgee" id="WBGene00000235">
    <property type="expression patterns" value="Expressed in embryo and 4 other cell types or tissues"/>
</dbReference>
<dbReference type="GO" id="GO:0000793">
    <property type="term" value="C:condensed chromosome"/>
    <property type="evidence" value="ECO:0000314"/>
    <property type="project" value="WormBase"/>
</dbReference>
<dbReference type="GO" id="GO:0000779">
    <property type="term" value="C:condensed chromosome, centromeric region"/>
    <property type="evidence" value="ECO:0000314"/>
    <property type="project" value="WormBase"/>
</dbReference>
<dbReference type="GO" id="GO:0005737">
    <property type="term" value="C:cytoplasm"/>
    <property type="evidence" value="ECO:0000314"/>
    <property type="project" value="WormBase"/>
</dbReference>
<dbReference type="GO" id="GO:0005635">
    <property type="term" value="C:nuclear envelope"/>
    <property type="evidence" value="ECO:0000314"/>
    <property type="project" value="WormBase"/>
</dbReference>
<dbReference type="GO" id="GO:0005654">
    <property type="term" value="C:nucleoplasm"/>
    <property type="evidence" value="ECO:0000314"/>
    <property type="project" value="WormBase"/>
</dbReference>
<dbReference type="GO" id="GO:0005634">
    <property type="term" value="C:nucleus"/>
    <property type="evidence" value="ECO:0000318"/>
    <property type="project" value="GO_Central"/>
</dbReference>
<dbReference type="GO" id="GO:0003677">
    <property type="term" value="F:DNA binding"/>
    <property type="evidence" value="ECO:0000318"/>
    <property type="project" value="GO_Central"/>
</dbReference>
<dbReference type="GO" id="GO:0003690">
    <property type="term" value="F:double-stranded DNA binding"/>
    <property type="evidence" value="ECO:0000250"/>
    <property type="project" value="WormBase"/>
</dbReference>
<dbReference type="GO" id="GO:0042802">
    <property type="term" value="F:identical protein binding"/>
    <property type="evidence" value="ECO:0000250"/>
    <property type="project" value="WormBase"/>
</dbReference>
<dbReference type="GO" id="GO:0051276">
    <property type="term" value="P:chromosome organization"/>
    <property type="evidence" value="ECO:0000315"/>
    <property type="project" value="WormBase"/>
</dbReference>
<dbReference type="GO" id="GO:0007059">
    <property type="term" value="P:chromosome segregation"/>
    <property type="evidence" value="ECO:0000315"/>
    <property type="project" value="WormBase"/>
</dbReference>
<dbReference type="GO" id="GO:0006281">
    <property type="term" value="P:DNA repair"/>
    <property type="evidence" value="ECO:0007669"/>
    <property type="project" value="UniProtKB-KW"/>
</dbReference>
<dbReference type="GO" id="GO:0009792">
    <property type="term" value="P:embryo development ending in birth or egg hatching"/>
    <property type="evidence" value="ECO:0000315"/>
    <property type="project" value="WormBase"/>
</dbReference>
<dbReference type="GO" id="GO:0010165">
    <property type="term" value="P:response to X-ray"/>
    <property type="evidence" value="ECO:0000315"/>
    <property type="project" value="WormBase"/>
</dbReference>
<dbReference type="FunFam" id="1.10.150.40:FF:000005">
    <property type="entry name" value="Barrier-to-autointegration factor 1"/>
    <property type="match status" value="1"/>
</dbReference>
<dbReference type="Gene3D" id="1.10.150.40">
    <property type="entry name" value="Barrier-to-autointegration factor, BAF"/>
    <property type="match status" value="1"/>
</dbReference>
<dbReference type="InterPro" id="IPR051387">
    <property type="entry name" value="BAF"/>
</dbReference>
<dbReference type="InterPro" id="IPR004122">
    <property type="entry name" value="BAF_prot"/>
</dbReference>
<dbReference type="InterPro" id="IPR036617">
    <property type="entry name" value="BAF_sf"/>
</dbReference>
<dbReference type="PANTHER" id="PTHR47507">
    <property type="entry name" value="BARRIER TO AUTOINTEGRATION FACTOR 2"/>
    <property type="match status" value="1"/>
</dbReference>
<dbReference type="PANTHER" id="PTHR47507:SF6">
    <property type="entry name" value="BARRIER-TO-AUTOINTEGRATION FACTOR"/>
    <property type="match status" value="1"/>
</dbReference>
<dbReference type="Pfam" id="PF02961">
    <property type="entry name" value="SAM_BAF"/>
    <property type="match status" value="1"/>
</dbReference>
<dbReference type="SMART" id="SM01023">
    <property type="entry name" value="BAF"/>
    <property type="match status" value="1"/>
</dbReference>
<dbReference type="SUPFAM" id="SSF47798">
    <property type="entry name" value="Barrier-to-autointegration factor, BAF"/>
    <property type="match status" value="1"/>
</dbReference>
<keyword id="KW-0227">DNA damage</keyword>
<keyword id="KW-0234">DNA repair</keyword>
<keyword id="KW-0238">DNA-binding</keyword>
<keyword id="KW-0539">Nucleus</keyword>
<keyword id="KW-0597">Phosphoprotein</keyword>
<keyword id="KW-1185">Reference proteome</keyword>
<evidence type="ECO:0000269" key="1">
    <source>
    </source>
</evidence>
<evidence type="ECO:0000269" key="2">
    <source>
    </source>
</evidence>
<evidence type="ECO:0000269" key="3">
    <source>
    </source>
</evidence>
<evidence type="ECO:0000269" key="4">
    <source>
    </source>
</evidence>
<evidence type="ECO:0000305" key="5"/>
<gene>
    <name type="primary">baf-1</name>
    <name type="ORF">B0464.7</name>
</gene>
<proteinExistence type="evidence at protein level"/>
<protein>
    <recommendedName>
        <fullName>Barrier-to-autointegration factor 1</fullName>
    </recommendedName>
</protein>
<comment type="function">
    <text evidence="1 2 3">DNA-binding protein which plays an essential role in nuclear envelope formation (PubMed:17170708). Required for normal chromosome segregation during mitosis (PubMed:12684533). Associates with the nuclear lamina via its interaction with LEM domain containing proteins emr-1 and lem-2 (PubMed:12684533). In association with lem-3, plays a role in radiation-induced DNA damage repair response (PubMed:22383942).</text>
</comment>
<comment type="subunit">
    <text evidence="1 4">Interacts with emr-1 and lem-2. Interacts with lem-4l, leading to decreased phosphorylation by VRK1 and promoting dephosphorylation by protein phosphatase 2A (PP2A).</text>
</comment>
<comment type="interaction">
    <interactant intactId="EBI-2535603">
        <id>Q03565</id>
    </interactant>
    <interactant intactId="EBI-2535391">
        <id>Q9XTB5</id>
        <label>lem-2</label>
    </interactant>
    <organismsDiffer>false</organismsDiffer>
    <experiments>2</experiments>
</comment>
<comment type="interaction">
    <interactant intactId="EBI-2535603">
        <id>Q03565</id>
    </interactant>
    <interactant intactId="EBI-2414048">
        <id>Q19848</id>
        <label>vrk-1</label>
    </interactant>
    <organismsDiffer>false</organismsDiffer>
    <experiments>3</experiments>
</comment>
<comment type="subcellular location">
    <subcellularLocation>
        <location evidence="2">Nucleus</location>
    </subcellularLocation>
</comment>
<comment type="PTM">
    <text evidence="4">Phosphorylated by vrk-1. Phosphorylation by vrk-1 in mitosis is essential to achieve correct timing of recruitment of nuclear envelope components during nuclear envelope assembly. Dephosphorylated by protein phosphatase 2A (PP2A) following interaction with lem-4l during mitotic exit, leading to mitotic nuclear envelope reassembly.</text>
</comment>
<comment type="disruption phenotype">
    <text evidence="2">Embryonically lethal. Embryos suffer loss of nuclear structure and of a continuous nuclear membrane. baf-1 is delocalized to the chromatin. At permissive temperature (15 degrees Celsius) about 30% of the embryos die, and the survivors appear normal.</text>
</comment>
<comment type="similarity">
    <text evidence="5">Belongs to the BAF family.</text>
</comment>